<accession>Q0P5B9</accession>
<sequence>MAAPRPCADGPCCSHPSAAPGVQQTLDEMDFERGIWSAALNGDLGRVKYLIQKAVDPSQPDSAGYTALHYASRNGHYAVCQFLLESGAKCDAQTHGGATALHRASYCGHTDIARLLLSHGSNPRLVDADGMTSLHKAAEKGHVDICSLLLQHSPALKAVRDRKSRLACDLLPGNSDLRDLLAS</sequence>
<reference key="1">
    <citation type="submission" date="2006-08" db="EMBL/GenBank/DDBJ databases">
        <authorList>
            <consortium name="NIH - Mammalian Gene Collection (MGC) project"/>
        </authorList>
    </citation>
    <scope>NUCLEOTIDE SEQUENCE [LARGE SCALE MRNA]</scope>
    <source>
        <strain>Hereford</strain>
        <tissue>Fetal pons</tissue>
    </source>
</reference>
<proteinExistence type="evidence at transcript level"/>
<keyword id="KW-0040">ANK repeat</keyword>
<keyword id="KW-0597">Phosphoprotein</keyword>
<keyword id="KW-1185">Reference proteome</keyword>
<keyword id="KW-0677">Repeat</keyword>
<comment type="similarity">
    <text evidence="2">Belongs to the ANKRD39 family.</text>
</comment>
<dbReference type="EMBL" id="BC120254">
    <property type="protein sequence ID" value="AAI20255.1"/>
    <property type="molecule type" value="mRNA"/>
</dbReference>
<dbReference type="RefSeq" id="NP_001068939.1">
    <property type="nucleotide sequence ID" value="NM_001075471.2"/>
</dbReference>
<dbReference type="SMR" id="Q0P5B9"/>
<dbReference type="FunCoup" id="Q0P5B9">
    <property type="interactions" value="260"/>
</dbReference>
<dbReference type="STRING" id="9913.ENSBTAP00000014400"/>
<dbReference type="PaxDb" id="9913-ENSBTAP00000014400"/>
<dbReference type="GeneID" id="510840"/>
<dbReference type="KEGG" id="bta:510840"/>
<dbReference type="CTD" id="51239"/>
<dbReference type="eggNOG" id="KOG0504">
    <property type="taxonomic scope" value="Eukaryota"/>
</dbReference>
<dbReference type="HOGENOM" id="CLU_000134_35_1_1"/>
<dbReference type="InParanoid" id="Q0P5B9"/>
<dbReference type="OrthoDB" id="539213at2759"/>
<dbReference type="TreeFam" id="TF326597"/>
<dbReference type="Proteomes" id="UP000009136">
    <property type="component" value="Unplaced"/>
</dbReference>
<dbReference type="Gene3D" id="1.25.40.20">
    <property type="entry name" value="Ankyrin repeat-containing domain"/>
    <property type="match status" value="1"/>
</dbReference>
<dbReference type="InterPro" id="IPR002110">
    <property type="entry name" value="Ankyrin_rpt"/>
</dbReference>
<dbReference type="InterPro" id="IPR036770">
    <property type="entry name" value="Ankyrin_rpt-contain_sf"/>
</dbReference>
<dbReference type="PANTHER" id="PTHR24171">
    <property type="entry name" value="ANKYRIN REPEAT DOMAIN-CONTAINING PROTEIN 39-RELATED"/>
    <property type="match status" value="1"/>
</dbReference>
<dbReference type="PANTHER" id="PTHR24171:SF8">
    <property type="entry name" value="BRCA1-ASSOCIATED RING DOMAIN PROTEIN 1"/>
    <property type="match status" value="1"/>
</dbReference>
<dbReference type="Pfam" id="PF12796">
    <property type="entry name" value="Ank_2"/>
    <property type="match status" value="1"/>
</dbReference>
<dbReference type="Pfam" id="PF13637">
    <property type="entry name" value="Ank_4"/>
    <property type="match status" value="1"/>
</dbReference>
<dbReference type="PRINTS" id="PR01415">
    <property type="entry name" value="ANKYRIN"/>
</dbReference>
<dbReference type="SMART" id="SM00248">
    <property type="entry name" value="ANK"/>
    <property type="match status" value="4"/>
</dbReference>
<dbReference type="SUPFAM" id="SSF48403">
    <property type="entry name" value="Ankyrin repeat"/>
    <property type="match status" value="1"/>
</dbReference>
<dbReference type="PROSITE" id="PS50297">
    <property type="entry name" value="ANK_REP_REGION"/>
    <property type="match status" value="1"/>
</dbReference>
<dbReference type="PROSITE" id="PS50088">
    <property type="entry name" value="ANK_REPEAT"/>
    <property type="match status" value="3"/>
</dbReference>
<feature type="chain" id="PRO_0000283056" description="Ankyrin repeat domain-containing protein 39">
    <location>
        <begin position="1"/>
        <end position="183"/>
    </location>
</feature>
<feature type="repeat" description="ANK 1">
    <location>
        <begin position="30"/>
        <end position="59"/>
    </location>
</feature>
<feature type="repeat" description="ANK 2">
    <location>
        <begin position="63"/>
        <end position="92"/>
    </location>
</feature>
<feature type="repeat" description="ANK 3">
    <location>
        <begin position="96"/>
        <end position="125"/>
    </location>
</feature>
<feature type="repeat" description="ANK 4">
    <location>
        <begin position="129"/>
        <end position="158"/>
    </location>
</feature>
<feature type="modified residue" description="Phosphoserine" evidence="1">
    <location>
        <position position="153"/>
    </location>
</feature>
<organism>
    <name type="scientific">Bos taurus</name>
    <name type="common">Bovine</name>
    <dbReference type="NCBI Taxonomy" id="9913"/>
    <lineage>
        <taxon>Eukaryota</taxon>
        <taxon>Metazoa</taxon>
        <taxon>Chordata</taxon>
        <taxon>Craniata</taxon>
        <taxon>Vertebrata</taxon>
        <taxon>Euteleostomi</taxon>
        <taxon>Mammalia</taxon>
        <taxon>Eutheria</taxon>
        <taxon>Laurasiatheria</taxon>
        <taxon>Artiodactyla</taxon>
        <taxon>Ruminantia</taxon>
        <taxon>Pecora</taxon>
        <taxon>Bovidae</taxon>
        <taxon>Bovinae</taxon>
        <taxon>Bos</taxon>
    </lineage>
</organism>
<protein>
    <recommendedName>
        <fullName>Ankyrin repeat domain-containing protein 39</fullName>
    </recommendedName>
</protein>
<gene>
    <name type="primary">ANKRD39</name>
</gene>
<evidence type="ECO:0000250" key="1">
    <source>
        <dbReference type="UniProtKB" id="Q53RE8"/>
    </source>
</evidence>
<evidence type="ECO:0000305" key="2"/>
<name>ANR39_BOVIN</name>